<sequence length="273" mass="30893">MSQRTVFFISDGTGITAETFGNAILAQFEFKPRHVRLPFIDSVDKAHQAIRQINHAAEVEGKRPIVFTTLVNMEILAVIKTHCNGMLLDMFGMFVAPLESELGIKSNHRVGRFSDASKSKEYDDRIEAINFSLAHDDGQSNKDLAGSDVILVGVSRSGKTPTSLYLAMQYGLKASNYPLIPEDFERRQLPPALVPHRKKIFGLTIAPERLSQIRNERRPHSTYASLANCRHEIHEAEAMMRREGIRWLSTTTKSIEEISTTILQEIRPERLEY</sequence>
<keyword id="KW-0418">Kinase</keyword>
<keyword id="KW-0547">Nucleotide-binding</keyword>
<keyword id="KW-1185">Reference proteome</keyword>
<keyword id="KW-0723">Serine/threonine-protein kinase</keyword>
<keyword id="KW-0808">Transferase</keyword>
<proteinExistence type="inferred from homology"/>
<protein>
    <recommendedName>
        <fullName evidence="1">Putative phosphoenolpyruvate synthase regulatory protein</fullName>
        <shortName evidence="1">PEP synthase regulatory protein</shortName>
        <shortName evidence="1">PSRP</shortName>
        <ecNumber evidence="1">2.7.11.33</ecNumber>
        <ecNumber evidence="1">2.7.4.28</ecNumber>
    </recommendedName>
    <alternativeName>
        <fullName evidence="1">Pyruvate, water dikinase regulatory protein</fullName>
    </alternativeName>
</protein>
<dbReference type="EC" id="2.7.11.33" evidence="1"/>
<dbReference type="EC" id="2.7.4.28" evidence="1"/>
<dbReference type="EMBL" id="CP000316">
    <property type="protein sequence ID" value="ABE44957.1"/>
    <property type="molecule type" value="Genomic_DNA"/>
</dbReference>
<dbReference type="RefSeq" id="WP_011483954.1">
    <property type="nucleotide sequence ID" value="NC_007948.1"/>
</dbReference>
<dbReference type="SMR" id="Q128T5"/>
<dbReference type="STRING" id="296591.Bpro_3043"/>
<dbReference type="KEGG" id="pol:Bpro_3043"/>
<dbReference type="eggNOG" id="COG1806">
    <property type="taxonomic scope" value="Bacteria"/>
</dbReference>
<dbReference type="HOGENOM" id="CLU_046206_1_0_4"/>
<dbReference type="OrthoDB" id="9782201at2"/>
<dbReference type="Proteomes" id="UP000001983">
    <property type="component" value="Chromosome"/>
</dbReference>
<dbReference type="GO" id="GO:0043531">
    <property type="term" value="F:ADP binding"/>
    <property type="evidence" value="ECO:0007669"/>
    <property type="project" value="UniProtKB-UniRule"/>
</dbReference>
<dbReference type="GO" id="GO:0005524">
    <property type="term" value="F:ATP binding"/>
    <property type="evidence" value="ECO:0007669"/>
    <property type="project" value="InterPro"/>
</dbReference>
<dbReference type="GO" id="GO:0016776">
    <property type="term" value="F:phosphotransferase activity, phosphate group as acceptor"/>
    <property type="evidence" value="ECO:0007669"/>
    <property type="project" value="UniProtKB-UniRule"/>
</dbReference>
<dbReference type="GO" id="GO:0004674">
    <property type="term" value="F:protein serine/threonine kinase activity"/>
    <property type="evidence" value="ECO:0007669"/>
    <property type="project" value="UniProtKB-UniRule"/>
</dbReference>
<dbReference type="HAMAP" id="MF_01062">
    <property type="entry name" value="PSRP"/>
    <property type="match status" value="1"/>
</dbReference>
<dbReference type="InterPro" id="IPR005177">
    <property type="entry name" value="Kinase-pyrophosphorylase"/>
</dbReference>
<dbReference type="InterPro" id="IPR026530">
    <property type="entry name" value="PSRP"/>
</dbReference>
<dbReference type="NCBIfam" id="NF003742">
    <property type="entry name" value="PRK05339.1"/>
    <property type="match status" value="1"/>
</dbReference>
<dbReference type="PANTHER" id="PTHR31756">
    <property type="entry name" value="PYRUVATE, PHOSPHATE DIKINASE REGULATORY PROTEIN 1, CHLOROPLASTIC"/>
    <property type="match status" value="1"/>
</dbReference>
<dbReference type="PANTHER" id="PTHR31756:SF3">
    <property type="entry name" value="PYRUVATE, PHOSPHATE DIKINASE REGULATORY PROTEIN 1, CHLOROPLASTIC"/>
    <property type="match status" value="1"/>
</dbReference>
<dbReference type="Pfam" id="PF03618">
    <property type="entry name" value="Kinase-PPPase"/>
    <property type="match status" value="1"/>
</dbReference>
<evidence type="ECO:0000255" key="1">
    <source>
        <dbReference type="HAMAP-Rule" id="MF_01062"/>
    </source>
</evidence>
<accession>Q128T5</accession>
<reference key="1">
    <citation type="journal article" date="2008" name="Appl. Environ. Microbiol.">
        <title>The genome of Polaromonas sp. strain JS666: insights into the evolution of a hydrocarbon- and xenobiotic-degrading bacterium, and features of relevance to biotechnology.</title>
        <authorList>
            <person name="Mattes T.E."/>
            <person name="Alexander A.K."/>
            <person name="Richardson P.M."/>
            <person name="Munk A.C."/>
            <person name="Han C.S."/>
            <person name="Stothard P."/>
            <person name="Coleman N.V."/>
        </authorList>
    </citation>
    <scope>NUCLEOTIDE SEQUENCE [LARGE SCALE GENOMIC DNA]</scope>
    <source>
        <strain>JS666 / ATCC BAA-500</strain>
    </source>
</reference>
<feature type="chain" id="PRO_0000316713" description="Putative phosphoenolpyruvate synthase regulatory protein">
    <location>
        <begin position="1"/>
        <end position="273"/>
    </location>
</feature>
<feature type="binding site" evidence="1">
    <location>
        <begin position="153"/>
        <end position="160"/>
    </location>
    <ligand>
        <name>ADP</name>
        <dbReference type="ChEBI" id="CHEBI:456216"/>
    </ligand>
</feature>
<name>PSRP_POLSJ</name>
<gene>
    <name type="ordered locus">Bpro_3043</name>
</gene>
<organism>
    <name type="scientific">Polaromonas sp. (strain JS666 / ATCC BAA-500)</name>
    <dbReference type="NCBI Taxonomy" id="296591"/>
    <lineage>
        <taxon>Bacteria</taxon>
        <taxon>Pseudomonadati</taxon>
        <taxon>Pseudomonadota</taxon>
        <taxon>Betaproteobacteria</taxon>
        <taxon>Burkholderiales</taxon>
        <taxon>Comamonadaceae</taxon>
        <taxon>Polaromonas</taxon>
    </lineage>
</organism>
<comment type="function">
    <text evidence="1">Bifunctional serine/threonine kinase and phosphorylase involved in the regulation of the phosphoenolpyruvate synthase (PEPS) by catalyzing its phosphorylation/dephosphorylation.</text>
</comment>
<comment type="catalytic activity">
    <reaction evidence="1">
        <text>[pyruvate, water dikinase] + ADP = [pyruvate, water dikinase]-phosphate + AMP + H(+)</text>
        <dbReference type="Rhea" id="RHEA:46020"/>
        <dbReference type="Rhea" id="RHEA-COMP:11425"/>
        <dbReference type="Rhea" id="RHEA-COMP:11426"/>
        <dbReference type="ChEBI" id="CHEBI:15378"/>
        <dbReference type="ChEBI" id="CHEBI:43176"/>
        <dbReference type="ChEBI" id="CHEBI:68546"/>
        <dbReference type="ChEBI" id="CHEBI:456215"/>
        <dbReference type="ChEBI" id="CHEBI:456216"/>
        <dbReference type="EC" id="2.7.11.33"/>
    </reaction>
</comment>
<comment type="catalytic activity">
    <reaction evidence="1">
        <text>[pyruvate, water dikinase]-phosphate + phosphate + H(+) = [pyruvate, water dikinase] + diphosphate</text>
        <dbReference type="Rhea" id="RHEA:48580"/>
        <dbReference type="Rhea" id="RHEA-COMP:11425"/>
        <dbReference type="Rhea" id="RHEA-COMP:11426"/>
        <dbReference type="ChEBI" id="CHEBI:15378"/>
        <dbReference type="ChEBI" id="CHEBI:33019"/>
        <dbReference type="ChEBI" id="CHEBI:43176"/>
        <dbReference type="ChEBI" id="CHEBI:43474"/>
        <dbReference type="ChEBI" id="CHEBI:68546"/>
        <dbReference type="EC" id="2.7.4.28"/>
    </reaction>
</comment>
<comment type="similarity">
    <text evidence="1">Belongs to the pyruvate, phosphate/water dikinase regulatory protein family. PSRP subfamily.</text>
</comment>